<comment type="function">
    <text evidence="1">Does not have 2'-5'-OAS activity, but can bind double-stranded RNA. Displays antiviral activity against viruses via an alternative antiviral pathway independent of RNase L (By similarity).</text>
</comment>
<comment type="subunit">
    <text evidence="1">Interacts with OSBPL1A and ABCF3.</text>
</comment>
<comment type="subcellular location">
    <subcellularLocation>
        <location evidence="1">Endoplasmic reticulum membrane</location>
        <topology evidence="1">Single-pass type IV membrane protein</topology>
    </subcellularLocation>
</comment>
<comment type="tissue specificity">
    <text evidence="3">Highly expressed in the brain, liver, spleen and heart.</text>
</comment>
<comment type="similarity">
    <text evidence="4">Belongs to the 2-5A synthase family.</text>
</comment>
<dbReference type="EMBL" id="AF068268">
    <property type="protein sequence ID" value="AAC19135.1"/>
    <property type="molecule type" value="mRNA"/>
</dbReference>
<dbReference type="EMBL" id="CH473973">
    <property type="protein sequence ID" value="EDM13762.1"/>
    <property type="molecule type" value="Genomic_DNA"/>
</dbReference>
<dbReference type="EMBL" id="BC091121">
    <property type="protein sequence ID" value="AAH91121.1"/>
    <property type="molecule type" value="mRNA"/>
</dbReference>
<dbReference type="RefSeq" id="NP_653353.2">
    <property type="nucleotide sequence ID" value="NM_144752.2"/>
</dbReference>
<dbReference type="SMR" id="Q5BKD0"/>
<dbReference type="FunCoup" id="Q5BKD0">
    <property type="interactions" value="174"/>
</dbReference>
<dbReference type="STRING" id="10116.ENSRNOP00000001853"/>
<dbReference type="PaxDb" id="10116-ENSRNOP00000001853"/>
<dbReference type="Ensembl" id="ENSRNOT00000048782.5">
    <property type="protein sequence ID" value="ENSRNOP00000042591.4"/>
    <property type="gene ID" value="ENSRNOG00000033220.7"/>
</dbReference>
<dbReference type="GeneID" id="246268"/>
<dbReference type="KEGG" id="rno:246268"/>
<dbReference type="UCSC" id="RGD:708393">
    <property type="organism name" value="rat"/>
</dbReference>
<dbReference type="AGR" id="RGD:708393"/>
<dbReference type="CTD" id="23961"/>
<dbReference type="RGD" id="708393">
    <property type="gene designation" value="Oas1b"/>
</dbReference>
<dbReference type="eggNOG" id="KOG0001">
    <property type="taxonomic scope" value="Eukaryota"/>
</dbReference>
<dbReference type="GeneTree" id="ENSGT00510000046406"/>
<dbReference type="InParanoid" id="Q5BKD0"/>
<dbReference type="OMA" id="CCMDLYG"/>
<dbReference type="OrthoDB" id="62241at9989"/>
<dbReference type="PhylomeDB" id="Q5BKD0"/>
<dbReference type="TreeFam" id="TF329749"/>
<dbReference type="PRO" id="PR:Q5BKD0"/>
<dbReference type="Proteomes" id="UP000002494">
    <property type="component" value="Chromosome 12"/>
</dbReference>
<dbReference type="Proteomes" id="UP000234681">
    <property type="component" value="Chromosome 12"/>
</dbReference>
<dbReference type="Bgee" id="ENSRNOG00000033220">
    <property type="expression patterns" value="Expressed in lung and 19 other cell types or tissues"/>
</dbReference>
<dbReference type="ExpressionAtlas" id="Q5BKD0">
    <property type="expression patterns" value="baseline and differential"/>
</dbReference>
<dbReference type="GO" id="GO:0005829">
    <property type="term" value="C:cytosol"/>
    <property type="evidence" value="ECO:0000318"/>
    <property type="project" value="GO_Central"/>
</dbReference>
<dbReference type="GO" id="GO:0005789">
    <property type="term" value="C:endoplasmic reticulum membrane"/>
    <property type="evidence" value="ECO:0000250"/>
    <property type="project" value="UniProtKB"/>
</dbReference>
<dbReference type="GO" id="GO:0016020">
    <property type="term" value="C:membrane"/>
    <property type="evidence" value="ECO:0000318"/>
    <property type="project" value="GO_Central"/>
</dbReference>
<dbReference type="GO" id="GO:0005654">
    <property type="term" value="C:nucleoplasm"/>
    <property type="evidence" value="ECO:0000318"/>
    <property type="project" value="GO_Central"/>
</dbReference>
<dbReference type="GO" id="GO:0003725">
    <property type="term" value="F:double-stranded RNA binding"/>
    <property type="evidence" value="ECO:0000250"/>
    <property type="project" value="UniProtKB"/>
</dbReference>
<dbReference type="GO" id="GO:0016779">
    <property type="term" value="F:nucleotidyltransferase activity"/>
    <property type="evidence" value="ECO:0007669"/>
    <property type="project" value="InterPro"/>
</dbReference>
<dbReference type="GO" id="GO:0140374">
    <property type="term" value="P:antiviral innate immune response"/>
    <property type="evidence" value="ECO:0000318"/>
    <property type="project" value="GO_Central"/>
</dbReference>
<dbReference type="GO" id="GO:0070106">
    <property type="term" value="P:interleukin-27-mediated signaling pathway"/>
    <property type="evidence" value="ECO:0000318"/>
    <property type="project" value="GO_Central"/>
</dbReference>
<dbReference type="GO" id="GO:0045071">
    <property type="term" value="P:negative regulation of viral genome replication"/>
    <property type="evidence" value="ECO:0000250"/>
    <property type="project" value="UniProtKB"/>
</dbReference>
<dbReference type="GO" id="GO:0009615">
    <property type="term" value="P:response to virus"/>
    <property type="evidence" value="ECO:0000250"/>
    <property type="project" value="UniProtKB"/>
</dbReference>
<dbReference type="GO" id="GO:0060337">
    <property type="term" value="P:type I interferon-mediated signaling pathway"/>
    <property type="evidence" value="ECO:0000318"/>
    <property type="project" value="GO_Central"/>
</dbReference>
<dbReference type="CDD" id="cd05400">
    <property type="entry name" value="NT_2-5OAS_ClassI-CCAase"/>
    <property type="match status" value="1"/>
</dbReference>
<dbReference type="FunFam" id="1.10.1410.20:FF:000001">
    <property type="entry name" value="2'-5'-oligoadenylate synthetase 1"/>
    <property type="match status" value="1"/>
</dbReference>
<dbReference type="FunFam" id="3.30.460.10:FF:000007">
    <property type="entry name" value="2'-5'-oligoadenylate synthetase 1"/>
    <property type="match status" value="1"/>
</dbReference>
<dbReference type="Gene3D" id="1.10.1410.20">
    <property type="entry name" value="2'-5'-oligoadenylate synthetase 1, domain 2"/>
    <property type="match status" value="1"/>
</dbReference>
<dbReference type="Gene3D" id="3.30.460.10">
    <property type="entry name" value="Beta Polymerase, domain 2"/>
    <property type="match status" value="1"/>
</dbReference>
<dbReference type="InterPro" id="IPR018952">
    <property type="entry name" value="2-5-oligoAdlate_synth_1_dom2/C"/>
</dbReference>
<dbReference type="InterPro" id="IPR006116">
    <property type="entry name" value="NT_2-5OAS_ClassI-CCAase"/>
</dbReference>
<dbReference type="InterPro" id="IPR043519">
    <property type="entry name" value="NT_sf"/>
</dbReference>
<dbReference type="InterPro" id="IPR002934">
    <property type="entry name" value="Polymerase_NTP_transf_dom"/>
</dbReference>
<dbReference type="PANTHER" id="PTHR11258">
    <property type="entry name" value="2-5 OLIGOADENYLATE SYNTHETASE"/>
    <property type="match status" value="1"/>
</dbReference>
<dbReference type="PANTHER" id="PTHR11258:SF19">
    <property type="entry name" value="INACTIVE 2'-5'-OLIGOADENYLATE SYNTHASE 1B"/>
    <property type="match status" value="1"/>
</dbReference>
<dbReference type="Pfam" id="PF01909">
    <property type="entry name" value="NTP_transf_2"/>
    <property type="match status" value="1"/>
</dbReference>
<dbReference type="Pfam" id="PF10421">
    <property type="entry name" value="OAS1_C"/>
    <property type="match status" value="1"/>
</dbReference>
<dbReference type="SUPFAM" id="SSF81301">
    <property type="entry name" value="Nucleotidyltransferase"/>
    <property type="match status" value="1"/>
</dbReference>
<dbReference type="SUPFAM" id="SSF81631">
    <property type="entry name" value="PAP/OAS1 substrate-binding domain"/>
    <property type="match status" value="1"/>
</dbReference>
<dbReference type="PROSITE" id="PS50152">
    <property type="entry name" value="25A_SYNTH_3"/>
    <property type="match status" value="1"/>
</dbReference>
<feature type="chain" id="PRO_0000418626" description="Inactive 2'-5'-oligoadenylate synthase 1B">
    <location>
        <begin position="1"/>
        <end position="379"/>
    </location>
</feature>
<feature type="topological domain" description="Cytoplasmic" evidence="2">
    <location>
        <begin position="1"/>
        <end position="355"/>
    </location>
</feature>
<feature type="transmembrane region" description="Helical; Anchor for type IV membrane protein" evidence="2">
    <location>
        <begin position="356"/>
        <end position="374"/>
    </location>
</feature>
<feature type="topological domain" description="Extracellular" evidence="2">
    <location>
        <begin position="375"/>
        <end position="379"/>
    </location>
</feature>
<feature type="sequence conflict" description="In Ref. 1; AAC19135." evidence="4" ref="1">
    <original>V</original>
    <variation>M</variation>
    <location>
        <position position="117"/>
    </location>
</feature>
<feature type="sequence conflict" description="In Ref. 1; AAC19135." evidence="4" ref="1">
    <original>Q</original>
    <variation>H</variation>
    <location>
        <position position="168"/>
    </location>
</feature>
<feature type="sequence conflict" description="In Ref. 1; AAC19135." evidence="4" ref="1">
    <original>NL</original>
    <variation>IF</variation>
    <location>
        <begin position="172"/>
        <end position="173"/>
    </location>
</feature>
<feature type="sequence conflict" description="In Ref. 1; AAC19135." evidence="4" ref="1">
    <original>T</original>
    <variation>N</variation>
    <location>
        <position position="178"/>
    </location>
</feature>
<sequence>MEQELRSIPASKLDQFIEVHLPDISFRDELREVIDVLCILLKNRCCRESSHPVRTSKVGKGGSSRKGTTLKGWSDADLVVFLDSFTCFGDQLNRRGEFTKEIKKLLFEVQRDRHIGVKIEVHSSWSPNHRALSFKLSAPDQQKEVKFDVLPAYDLLGHVCIPRKPNPQFYANLISERTSLGKEDEFSTCFTELQLYFLNWRPTKLKSLIRLVKHWYQLCKEKLGDPLPPQYALELLTIYAWERGGRLTKFNTAQGFRTVLELITKYKQLLIYWTVCYDFQHPEVSKYLRRQLKKPRPVILDPANPTGNIAGSNPKGWRRLAGEAAAWLRYPCFKYKDGFPVCPWDVPTEVDIPSQNYFFHIICLIFWLLLRLIFGKHSV</sequence>
<protein>
    <recommendedName>
        <fullName>Inactive 2'-5'-oligoadenylate synthase 1B</fullName>
        <shortName>(2-5')oligo(A) synthase 1B</shortName>
        <shortName>2-5A synthase 1B</shortName>
    </recommendedName>
</protein>
<evidence type="ECO:0000250" key="1"/>
<evidence type="ECO:0000255" key="2"/>
<evidence type="ECO:0000269" key="3">
    <source>
    </source>
</evidence>
<evidence type="ECO:0000305" key="4"/>
<name>OAS1B_RAT</name>
<gene>
    <name type="primary">Oas1b</name>
</gene>
<keyword id="KW-0051">Antiviral defense</keyword>
<keyword id="KW-0256">Endoplasmic reticulum</keyword>
<keyword id="KW-0391">Immunity</keyword>
<keyword id="KW-0399">Innate immunity</keyword>
<keyword id="KW-0472">Membrane</keyword>
<keyword id="KW-1185">Reference proteome</keyword>
<keyword id="KW-0694">RNA-binding</keyword>
<keyword id="KW-0812">Transmembrane</keyword>
<keyword id="KW-1133">Transmembrane helix</keyword>
<reference key="1">
    <citation type="journal article" date="2003" name="FEBS Lett.">
        <title>Human T-cell leukemia virus type 1 Tax protein stimulates the interferon-responsive enhancer element via NF-kappaB activity.</title>
        <authorList>
            <person name="Shimizu T."/>
            <person name="Kawakita S."/>
            <person name="Li Q.-H."/>
            <person name="Fukuhara S."/>
            <person name="Fujisawa J."/>
        </authorList>
    </citation>
    <scope>NUCLEOTIDE SEQUENCE [MRNA]</scope>
    <scope>TISSUE SPECIFICITY</scope>
</reference>
<reference key="2">
    <citation type="submission" date="2005-07" db="EMBL/GenBank/DDBJ databases">
        <authorList>
            <person name="Mural R.J."/>
            <person name="Adams M.D."/>
            <person name="Myers E.W."/>
            <person name="Smith H.O."/>
            <person name="Venter J.C."/>
        </authorList>
    </citation>
    <scope>NUCLEOTIDE SEQUENCE [LARGE SCALE GENOMIC DNA]</scope>
</reference>
<reference key="3">
    <citation type="journal article" date="2004" name="Genome Res.">
        <title>The status, quality, and expansion of the NIH full-length cDNA project: the Mammalian Gene Collection (MGC).</title>
        <authorList>
            <consortium name="The MGC Project Team"/>
        </authorList>
    </citation>
    <scope>NUCLEOTIDE SEQUENCE [LARGE SCALE MRNA]</scope>
    <source>
        <tissue>Thymus</tissue>
    </source>
</reference>
<reference key="4">
    <citation type="journal article" date="2006" name="J. Mol. Evol.">
        <title>The mammalian 2'-5' oligoadenylate synthetase gene family: evidence for concerted evolution of paralogous Oas1 genes in Rodentia and Artiodactyla.</title>
        <authorList>
            <person name="Perelygin A.A."/>
            <person name="Zharkikh A.A."/>
            <person name="Scherbik S.V."/>
            <person name="Brinton M.A."/>
        </authorList>
    </citation>
    <scope>REVIEW</scope>
</reference>
<organism>
    <name type="scientific">Rattus norvegicus</name>
    <name type="common">Rat</name>
    <dbReference type="NCBI Taxonomy" id="10116"/>
    <lineage>
        <taxon>Eukaryota</taxon>
        <taxon>Metazoa</taxon>
        <taxon>Chordata</taxon>
        <taxon>Craniata</taxon>
        <taxon>Vertebrata</taxon>
        <taxon>Euteleostomi</taxon>
        <taxon>Mammalia</taxon>
        <taxon>Eutheria</taxon>
        <taxon>Euarchontoglires</taxon>
        <taxon>Glires</taxon>
        <taxon>Rodentia</taxon>
        <taxon>Myomorpha</taxon>
        <taxon>Muroidea</taxon>
        <taxon>Muridae</taxon>
        <taxon>Murinae</taxon>
        <taxon>Rattus</taxon>
    </lineage>
</organism>
<accession>Q5BKD0</accession>
<accession>O70522</accession>
<proteinExistence type="evidence at transcript level"/>